<sequence length="227" mass="26049">MELVFIRHGFSEWNAKNLFTGWRDVNLTERGVEEAKTAGKKLLDKGYEFDIAFTSVLTRAIKTCNIVLEESHQLWIPQVKNWRLNERHYGALQGLDKKATAEQYGDEQVHIWRRSYDISPPDLDPQDPNSAHNDRRYANIPSDVVPNAENLKLTLERALPFWEDQIAPAMLSGKRVLVVAHGNSLRALAKHIIGISDAEIMDFEIPTGQPLVLKLDDKLNYVEHYYL</sequence>
<keyword id="KW-0312">Gluconeogenesis</keyword>
<keyword id="KW-0324">Glycolysis</keyword>
<keyword id="KW-0413">Isomerase</keyword>
<keyword id="KW-1185">Reference proteome</keyword>
<protein>
    <recommendedName>
        <fullName evidence="1">2,3-bisphosphoglycerate-dependent phosphoglycerate mutase</fullName>
        <shortName evidence="1">BPG-dependent PGAM</shortName>
        <shortName evidence="1">PGAM</shortName>
        <shortName evidence="1">Phosphoglyceromutase</shortName>
        <shortName evidence="1">dPGM</shortName>
        <ecNumber evidence="1">5.4.2.11</ecNumber>
    </recommendedName>
</protein>
<feature type="chain" id="PRO_0000179882" description="2,3-bisphosphoglycerate-dependent phosphoglycerate mutase">
    <location>
        <begin position="1"/>
        <end position="227"/>
    </location>
</feature>
<feature type="active site" description="Tele-phosphohistidine intermediate" evidence="1">
    <location>
        <position position="8"/>
    </location>
</feature>
<feature type="active site" description="Proton donor/acceptor" evidence="1">
    <location>
        <position position="86"/>
    </location>
</feature>
<feature type="binding site" evidence="1">
    <location>
        <begin position="7"/>
        <end position="14"/>
    </location>
    <ligand>
        <name>substrate</name>
    </ligand>
</feature>
<feature type="binding site" evidence="1">
    <location>
        <begin position="20"/>
        <end position="21"/>
    </location>
    <ligand>
        <name>substrate</name>
    </ligand>
</feature>
<feature type="binding site" evidence="1">
    <location>
        <position position="59"/>
    </location>
    <ligand>
        <name>substrate</name>
    </ligand>
</feature>
<feature type="binding site" evidence="1">
    <location>
        <begin position="86"/>
        <end position="89"/>
    </location>
    <ligand>
        <name>substrate</name>
    </ligand>
</feature>
<feature type="binding site" evidence="1">
    <location>
        <position position="97"/>
    </location>
    <ligand>
        <name>substrate</name>
    </ligand>
</feature>
<feature type="binding site" evidence="1">
    <location>
        <begin position="113"/>
        <end position="114"/>
    </location>
    <ligand>
        <name>substrate</name>
    </ligand>
</feature>
<feature type="binding site" evidence="1">
    <location>
        <begin position="182"/>
        <end position="183"/>
    </location>
    <ligand>
        <name>substrate</name>
    </ligand>
</feature>
<feature type="site" description="Transition state stabilizer" evidence="1">
    <location>
        <position position="181"/>
    </location>
</feature>
<name>GPMA_HAEIN</name>
<reference key="1">
    <citation type="journal article" date="1995" name="Science">
        <title>Whole-genome random sequencing and assembly of Haemophilus influenzae Rd.</title>
        <authorList>
            <person name="Fleischmann R.D."/>
            <person name="Adams M.D."/>
            <person name="White O."/>
            <person name="Clayton R.A."/>
            <person name="Kirkness E.F."/>
            <person name="Kerlavage A.R."/>
            <person name="Bult C.J."/>
            <person name="Tomb J.-F."/>
            <person name="Dougherty B.A."/>
            <person name="Merrick J.M."/>
            <person name="McKenney K."/>
            <person name="Sutton G.G."/>
            <person name="FitzHugh W."/>
            <person name="Fields C.A."/>
            <person name="Gocayne J.D."/>
            <person name="Scott J.D."/>
            <person name="Shirley R."/>
            <person name="Liu L.-I."/>
            <person name="Glodek A."/>
            <person name="Kelley J.M."/>
            <person name="Weidman J.F."/>
            <person name="Phillips C.A."/>
            <person name="Spriggs T."/>
            <person name="Hedblom E."/>
            <person name="Cotton M.D."/>
            <person name="Utterback T.R."/>
            <person name="Hanna M.C."/>
            <person name="Nguyen D.T."/>
            <person name="Saudek D.M."/>
            <person name="Brandon R.C."/>
            <person name="Fine L.D."/>
            <person name="Fritchman J.L."/>
            <person name="Fuhrmann J.L."/>
            <person name="Geoghagen N.S.M."/>
            <person name="Gnehm C.L."/>
            <person name="McDonald L.A."/>
            <person name="Small K.V."/>
            <person name="Fraser C.M."/>
            <person name="Smith H.O."/>
            <person name="Venter J.C."/>
        </authorList>
    </citation>
    <scope>NUCLEOTIDE SEQUENCE [LARGE SCALE GENOMIC DNA]</scope>
    <source>
        <strain>ATCC 51907 / DSM 11121 / KW20 / Rd</strain>
    </source>
</reference>
<comment type="function">
    <text evidence="1">Catalyzes the interconversion of 2-phosphoglycerate and 3-phosphoglycerate.</text>
</comment>
<comment type="catalytic activity">
    <reaction evidence="1">
        <text>(2R)-2-phosphoglycerate = (2R)-3-phosphoglycerate</text>
        <dbReference type="Rhea" id="RHEA:15901"/>
        <dbReference type="ChEBI" id="CHEBI:58272"/>
        <dbReference type="ChEBI" id="CHEBI:58289"/>
        <dbReference type="EC" id="5.4.2.11"/>
    </reaction>
</comment>
<comment type="pathway">
    <text evidence="1">Carbohydrate degradation; glycolysis; pyruvate from D-glyceraldehyde 3-phosphate: step 3/5.</text>
</comment>
<comment type="subunit">
    <text evidence="1">Homodimer.</text>
</comment>
<comment type="similarity">
    <text evidence="1">Belongs to the phosphoglycerate mutase family. BPG-dependent PGAM subfamily.</text>
</comment>
<accession>P44865</accession>
<evidence type="ECO:0000255" key="1">
    <source>
        <dbReference type="HAMAP-Rule" id="MF_01039"/>
    </source>
</evidence>
<dbReference type="EC" id="5.4.2.11" evidence="1"/>
<dbReference type="EMBL" id="L42023">
    <property type="protein sequence ID" value="AAC22416.1"/>
    <property type="molecule type" value="Genomic_DNA"/>
</dbReference>
<dbReference type="PIR" id="A64091">
    <property type="entry name" value="A64091"/>
</dbReference>
<dbReference type="RefSeq" id="NP_438916.1">
    <property type="nucleotide sequence ID" value="NC_000907.1"/>
</dbReference>
<dbReference type="SMR" id="P44865"/>
<dbReference type="STRING" id="71421.HI_0757"/>
<dbReference type="EnsemblBacteria" id="AAC22416">
    <property type="protein sequence ID" value="AAC22416"/>
    <property type="gene ID" value="HI_0757"/>
</dbReference>
<dbReference type="KEGG" id="hin:HI_0757"/>
<dbReference type="PATRIC" id="fig|71421.8.peg.795"/>
<dbReference type="eggNOG" id="COG0588">
    <property type="taxonomic scope" value="Bacteria"/>
</dbReference>
<dbReference type="HOGENOM" id="CLU_033323_1_5_6"/>
<dbReference type="OrthoDB" id="9781415at2"/>
<dbReference type="PhylomeDB" id="P44865"/>
<dbReference type="BioCyc" id="HINF71421:G1GJ1-795-MONOMER"/>
<dbReference type="UniPathway" id="UPA00109">
    <property type="reaction ID" value="UER00186"/>
</dbReference>
<dbReference type="Proteomes" id="UP000000579">
    <property type="component" value="Chromosome"/>
</dbReference>
<dbReference type="GO" id="GO:0004619">
    <property type="term" value="F:phosphoglycerate mutase activity"/>
    <property type="evidence" value="ECO:0007669"/>
    <property type="project" value="UniProtKB-EC"/>
</dbReference>
<dbReference type="GO" id="GO:0006094">
    <property type="term" value="P:gluconeogenesis"/>
    <property type="evidence" value="ECO:0007669"/>
    <property type="project" value="UniProtKB-UniRule"/>
</dbReference>
<dbReference type="GO" id="GO:0006096">
    <property type="term" value="P:glycolytic process"/>
    <property type="evidence" value="ECO:0007669"/>
    <property type="project" value="UniProtKB-UniRule"/>
</dbReference>
<dbReference type="CDD" id="cd07067">
    <property type="entry name" value="HP_PGM_like"/>
    <property type="match status" value="1"/>
</dbReference>
<dbReference type="FunFam" id="3.40.50.1240:FF:000003">
    <property type="entry name" value="2,3-bisphosphoglycerate-dependent phosphoglycerate mutase"/>
    <property type="match status" value="1"/>
</dbReference>
<dbReference type="Gene3D" id="3.40.50.1240">
    <property type="entry name" value="Phosphoglycerate mutase-like"/>
    <property type="match status" value="1"/>
</dbReference>
<dbReference type="HAMAP" id="MF_01039">
    <property type="entry name" value="PGAM_GpmA"/>
    <property type="match status" value="1"/>
</dbReference>
<dbReference type="InterPro" id="IPR013078">
    <property type="entry name" value="His_Pase_superF_clade-1"/>
</dbReference>
<dbReference type="InterPro" id="IPR029033">
    <property type="entry name" value="His_PPase_superfam"/>
</dbReference>
<dbReference type="InterPro" id="IPR005952">
    <property type="entry name" value="Phosphogly_mut1"/>
</dbReference>
<dbReference type="NCBIfam" id="TIGR01258">
    <property type="entry name" value="pgm_1"/>
    <property type="match status" value="1"/>
</dbReference>
<dbReference type="NCBIfam" id="NF010713">
    <property type="entry name" value="PRK14115.1"/>
    <property type="match status" value="1"/>
</dbReference>
<dbReference type="NCBIfam" id="NF010716">
    <property type="entry name" value="PRK14118.1"/>
    <property type="match status" value="1"/>
</dbReference>
<dbReference type="PANTHER" id="PTHR11931">
    <property type="entry name" value="PHOSPHOGLYCERATE MUTASE"/>
    <property type="match status" value="1"/>
</dbReference>
<dbReference type="Pfam" id="PF00300">
    <property type="entry name" value="His_Phos_1"/>
    <property type="match status" value="2"/>
</dbReference>
<dbReference type="PIRSF" id="PIRSF000709">
    <property type="entry name" value="6PFK_2-Ptase"/>
    <property type="match status" value="1"/>
</dbReference>
<dbReference type="SMART" id="SM00855">
    <property type="entry name" value="PGAM"/>
    <property type="match status" value="1"/>
</dbReference>
<dbReference type="SUPFAM" id="SSF53254">
    <property type="entry name" value="Phosphoglycerate mutase-like"/>
    <property type="match status" value="1"/>
</dbReference>
<gene>
    <name evidence="1" type="primary">gpmA</name>
    <name type="synonym">gpm</name>
    <name type="ordered locus">HI_0757</name>
</gene>
<organism>
    <name type="scientific">Haemophilus influenzae (strain ATCC 51907 / DSM 11121 / KW20 / Rd)</name>
    <dbReference type="NCBI Taxonomy" id="71421"/>
    <lineage>
        <taxon>Bacteria</taxon>
        <taxon>Pseudomonadati</taxon>
        <taxon>Pseudomonadota</taxon>
        <taxon>Gammaproteobacteria</taxon>
        <taxon>Pasteurellales</taxon>
        <taxon>Pasteurellaceae</taxon>
        <taxon>Haemophilus</taxon>
    </lineage>
</organism>
<proteinExistence type="inferred from homology"/>